<keyword id="KW-0002">3D-structure</keyword>
<keyword id="KW-0012">Acyltransferase</keyword>
<keyword id="KW-0963">Cytoplasm</keyword>
<keyword id="KW-0583">PHB biosynthesis</keyword>
<keyword id="KW-1185">Reference proteome</keyword>
<keyword id="KW-0808">Transferase</keyword>
<gene>
    <name evidence="6" type="primary">phaA</name>
    <name evidence="7" type="synonym">phbA</name>
    <name type="ordered locus">H16_A1438</name>
</gene>
<feature type="chain" id="PRO_0000206418" description="Acetyl-CoA acetyltransferase">
    <location>
        <begin position="1"/>
        <end position="393"/>
    </location>
</feature>
<feature type="active site" description="Acyl-thioester intermediate" evidence="2">
    <location>
        <position position="88"/>
    </location>
</feature>
<feature type="active site" description="Proton acceptor" evidence="1 9">
    <location>
        <position position="349"/>
    </location>
</feature>
<feature type="active site" description="Proton acceptor" evidence="1 9">
    <location>
        <position position="379"/>
    </location>
</feature>
<feature type="mutagenesis site" description="Almost complete loss of acetoacetyl-CoA thiolase activity." evidence="2">
    <original>C</original>
    <variation>S</variation>
    <location>
        <position position="88"/>
    </location>
</feature>
<feature type="mutagenesis site" description="Almost complete loss of acetoacetyl-CoA thiolase activity." evidence="2">
    <original>H</original>
    <variation>A</variation>
    <location>
        <position position="156"/>
    </location>
</feature>
<feature type="mutagenesis site" description="About 50% loss of acetoacetyl-CoA thiolase activity." evidence="2">
    <original>F</original>
    <variation>A</variation>
    <location>
        <position position="219"/>
    </location>
</feature>
<feature type="mutagenesis site" description="2-fold increase of acetoacetyl-CoA thiolase activity." evidence="2">
    <original>F</original>
    <variation>Y</variation>
    <location>
        <position position="219"/>
    </location>
</feature>
<feature type="mutagenesis site" description="Almost complete loss of acetoacetyl-CoA thiolase activity." evidence="2">
    <original>R</original>
    <variation>A</variation>
    <location>
        <position position="221"/>
    </location>
</feature>
<feature type="mutagenesis site" description="About 40% loss of acetoacetyl-CoA thiolase activity." evidence="2">
    <original>S</original>
    <variation>A</variation>
    <location>
        <position position="248"/>
    </location>
</feature>
<feature type="mutagenesis site" description="Almost complete loss of acetoacetyl-CoA thiolase activity." evidence="2">
    <original>H</original>
    <variation>A</variation>
    <location>
        <position position="349"/>
    </location>
</feature>
<feature type="mutagenesis site" description="Almost complete loss of acetoacetyl-CoA thiolase activity." evidence="2">
    <original>C</original>
    <variation>S</variation>
    <location>
        <position position="379"/>
    </location>
</feature>
<feature type="strand" evidence="14">
    <location>
        <begin position="4"/>
        <end position="12"/>
    </location>
</feature>
<feature type="turn" evidence="14">
    <location>
        <begin position="20"/>
        <end position="23"/>
    </location>
</feature>
<feature type="helix" evidence="14">
    <location>
        <begin position="26"/>
        <end position="41"/>
    </location>
</feature>
<feature type="helix" evidence="14">
    <location>
        <begin position="45"/>
        <end position="47"/>
    </location>
</feature>
<feature type="strand" evidence="14">
    <location>
        <begin position="50"/>
        <end position="54"/>
    </location>
</feature>
<feature type="helix" evidence="14">
    <location>
        <begin position="65"/>
        <end position="72"/>
    </location>
</feature>
<feature type="strand" evidence="14">
    <location>
        <begin position="81"/>
        <end position="85"/>
    </location>
</feature>
<feature type="helix" evidence="14">
    <location>
        <begin position="87"/>
        <end position="89"/>
    </location>
</feature>
<feature type="helix" evidence="14">
    <location>
        <begin position="90"/>
        <end position="103"/>
    </location>
</feature>
<feature type="strand" evidence="14">
    <location>
        <begin position="108"/>
        <end position="118"/>
    </location>
</feature>
<feature type="strand" evidence="14">
    <location>
        <begin position="123"/>
        <end position="125"/>
    </location>
</feature>
<feature type="turn" evidence="14">
    <location>
        <begin position="126"/>
        <end position="130"/>
    </location>
</feature>
<feature type="strand" evidence="15">
    <location>
        <begin position="133"/>
        <end position="135"/>
    </location>
</feature>
<feature type="strand" evidence="14">
    <location>
        <begin position="137"/>
        <end position="141"/>
    </location>
</feature>
<feature type="helix" evidence="14">
    <location>
        <begin position="142"/>
        <end position="147"/>
    </location>
</feature>
<feature type="turn" evidence="14">
    <location>
        <begin position="151"/>
        <end position="154"/>
    </location>
</feature>
<feature type="helix" evidence="14">
    <location>
        <begin position="157"/>
        <end position="168"/>
    </location>
</feature>
<feature type="helix" evidence="14">
    <location>
        <begin position="172"/>
        <end position="191"/>
    </location>
</feature>
<feature type="turn" evidence="14">
    <location>
        <begin position="192"/>
        <end position="198"/>
    </location>
</feature>
<feature type="strand" evidence="14">
    <location>
        <begin position="202"/>
        <end position="204"/>
    </location>
</feature>
<feature type="strand" evidence="14">
    <location>
        <begin position="207"/>
        <end position="210"/>
    </location>
</feature>
<feature type="strand" evidence="14">
    <location>
        <begin position="212"/>
        <end position="214"/>
    </location>
</feature>
<feature type="helix" evidence="14">
    <location>
        <begin position="226"/>
        <end position="230"/>
    </location>
</feature>
<feature type="helix" evidence="13">
    <location>
        <begin position="244"/>
        <end position="246"/>
    </location>
</feature>
<feature type="strand" evidence="14">
    <location>
        <begin position="251"/>
        <end position="261"/>
    </location>
</feature>
<feature type="helix" evidence="14">
    <location>
        <begin position="262"/>
        <end position="268"/>
    </location>
</feature>
<feature type="strand" evidence="14">
    <location>
        <begin position="273"/>
        <end position="283"/>
    </location>
</feature>
<feature type="helix" evidence="14">
    <location>
        <begin position="286"/>
        <end position="291"/>
    </location>
</feature>
<feature type="helix" evidence="14">
    <location>
        <begin position="293"/>
        <end position="304"/>
    </location>
</feature>
<feature type="helix" evidence="14">
    <location>
        <begin position="308"/>
        <end position="310"/>
    </location>
</feature>
<feature type="strand" evidence="14">
    <location>
        <begin position="312"/>
        <end position="316"/>
    </location>
</feature>
<feature type="helix" evidence="14">
    <location>
        <begin position="321"/>
        <end position="331"/>
    </location>
</feature>
<feature type="helix" evidence="14">
    <location>
        <begin position="335"/>
        <end position="337"/>
    </location>
</feature>
<feature type="helix" evidence="14">
    <location>
        <begin position="344"/>
        <end position="347"/>
    </location>
</feature>
<feature type="turn" evidence="14">
    <location>
        <begin position="351"/>
        <end position="353"/>
    </location>
</feature>
<feature type="helix" evidence="14">
    <location>
        <begin position="354"/>
        <end position="369"/>
    </location>
</feature>
<feature type="strand" evidence="14">
    <location>
        <begin position="373"/>
        <end position="380"/>
    </location>
</feature>
<feature type="turn" evidence="14">
    <location>
        <begin position="381"/>
        <end position="383"/>
    </location>
</feature>
<feature type="strand" evidence="14">
    <location>
        <begin position="384"/>
        <end position="391"/>
    </location>
</feature>
<comment type="function">
    <text evidence="2 3 4 5">Catalyzes the condensation of two acetyl-coA units to form acetoacetyl-CoA (PubMed:4198758). Is involved in the biosynthesis of polyhydroxybutyrate (PHB), which is accumulated as an intracellular energy reserve material when cells grow under conditions of nutrient limitation (PubMed:2670936, PubMed:4198758). Also catalyzes the reverse reaction, i.e. the cleavage of acetoacetyl-CoA, and is therefore also involved in the reutilization of PHB (PubMed:25152395, PubMed:4198758).</text>
</comment>
<comment type="catalytic activity">
    <reaction evidence="1 2 5">
        <text>2 acetyl-CoA = acetoacetyl-CoA + CoA</text>
        <dbReference type="Rhea" id="RHEA:21036"/>
        <dbReference type="ChEBI" id="CHEBI:57286"/>
        <dbReference type="ChEBI" id="CHEBI:57287"/>
        <dbReference type="ChEBI" id="CHEBI:57288"/>
        <dbReference type="EC" id="2.3.1.9"/>
    </reaction>
</comment>
<comment type="activity regulation">
    <text evidence="5">The condensation reaction is inhibited by free CoA. The cleavage reaction is characterized by substrate inhibition by acetoacetyl-CoA, which is partially relieved by free CoA.</text>
</comment>
<comment type="biophysicochemical properties">
    <kinetics>
        <KM evidence="5">390 uM for acetyl-CoA</KM>
    </kinetics>
    <phDependence>
        <text evidence="5">Optimum pH is 7.8 for the condensation reaction and 8.1 for the reverse cleavage reaction.</text>
    </phDependence>
</comment>
<comment type="pathway">
    <text evidence="4 5">Biopolymer metabolism; poly-(R)-3-hydroxybutanoate biosynthesis.</text>
</comment>
<comment type="subunit">
    <text evidence="2 5">Homotetramer.</text>
</comment>
<comment type="subcellular location">
    <subcellularLocation>
        <location>Cytoplasm</location>
    </subcellularLocation>
</comment>
<comment type="similarity">
    <text evidence="8">Belongs to the thiolase-like superfamily. Thiolase family.</text>
</comment>
<name>THIL_CUPNH</name>
<reference key="1">
    <citation type="journal article" date="1989" name="J. Biol. Chem.">
        <title>Poly-beta-hydroxybutyrate biosynthesis in Alcaligenes eutrophus H16. Characterization of the genes encoding beta-ketothiolase and acetoacetyl-CoA reductase.</title>
        <authorList>
            <person name="Peoples O.P."/>
            <person name="Sinskey A.J."/>
        </authorList>
    </citation>
    <scope>NUCLEOTIDE SEQUENCE [GENOMIC DNA]</scope>
    <scope>IDENTIFICATION</scope>
    <scope>FUNCTION</scope>
    <source>
        <strain>ATCC 17699 / DSM 428 / KCTC 22496 / NCIMB 10442 / H16 / Stanier 337</strain>
    </source>
</reference>
<reference key="2">
    <citation type="journal article" date="2006" name="Nat. Biotechnol.">
        <title>Genome sequence of the bioplastic-producing 'Knallgas' bacterium Ralstonia eutropha H16.</title>
        <authorList>
            <person name="Pohlmann A."/>
            <person name="Fricke W.F."/>
            <person name="Reinecke F."/>
            <person name="Kusian B."/>
            <person name="Liesegang H."/>
            <person name="Cramm R."/>
            <person name="Eitinger T."/>
            <person name="Ewering C."/>
            <person name="Poetter M."/>
            <person name="Schwartz E."/>
            <person name="Strittmatter A."/>
            <person name="Voss I."/>
            <person name="Gottschalk G."/>
            <person name="Steinbuechel A."/>
            <person name="Friedrich B."/>
            <person name="Bowien B."/>
        </authorList>
    </citation>
    <scope>NUCLEOTIDE SEQUENCE [LARGE SCALE GENOMIC DNA]</scope>
    <source>
        <strain>ATCC 17699 / DSM 428 / KCTC 22496 / NCIMB 10442 / H16 / Stanier 337</strain>
    </source>
</reference>
<reference key="3">
    <citation type="journal article" date="1989" name="J. Biol. Chem.">
        <title>Poly-beta-hydroxybutyrate (PHB) biosynthesis in Alcaligenes eutrophus H16. Identification and characterization of the PHB polymerase gene (phbC).</title>
        <authorList>
            <person name="Peoples O.P."/>
            <person name="Sinskey A.J."/>
        </authorList>
    </citation>
    <scope>NUCLEOTIDE SEQUENCE [GENOMIC DNA] OF 1-24</scope>
    <scope>FUNCTION IN PHB SYNTHESIS</scope>
    <scope>PATHWAY</scope>
    <source>
        <strain>ATCC 17699 / DSM 428 / KCTC 22496 / NCIMB 10442 / H16 / Stanier 337</strain>
    </source>
</reference>
<reference key="4">
    <citation type="journal article" date="1973" name="Biochem. J.">
        <title>Beta-ketothiolase from Hydrogenomonas eutropha H16 and its significance in the regulation of poly-beta-hydroxybutyrate metabolism.</title>
        <authorList>
            <person name="Oeding V."/>
            <person name="Schlegel H.G."/>
        </authorList>
    </citation>
    <scope>FUNCTION</scope>
    <scope>CATALYTIC ACTIVITY</scope>
    <scope>BIOPHYSICOCHEMICAL PROPERTIES</scope>
    <scope>ACTIVITY REGULATION</scope>
    <scope>SUBUNIT</scope>
    <scope>PATHWAY</scope>
    <source>
        <strain>ATCC 17699 / DSM 428 / KCTC 22496 / NCIMB 10442 / H16 / Stanier 337</strain>
    </source>
</reference>
<reference key="5">
    <citation type="journal article" date="1992" name="FEMS Microbiol. Rev.">
        <title>Molecular basis for biosynthesis and accumulation of polyhydroxyalkanoic acids in bacteria.</title>
        <authorList>
            <person name="Steinbuechel A."/>
            <person name="Hustede E."/>
            <person name="Liebergesell M."/>
            <person name="Pieper U."/>
            <person name="Timm A."/>
            <person name="Valentin H."/>
        </authorList>
    </citation>
    <scope>GENE NAME</scope>
</reference>
<reference evidence="10 11 12" key="6">
    <citation type="journal article" date="2014" name="Biochem. Biophys. Res. Commun.">
        <title>Crystal structure and biochemical characterization of PhaA from Ralstonia eutropha, a polyhydroxyalkanoate-producing bacterium.</title>
        <authorList>
            <person name="Kim E.J."/>
            <person name="Kim K.J."/>
        </authorList>
    </citation>
    <scope>X-RAY CRYSTALLOGRAPHY (1.52 ANGSTROMS) OF 2-393 APOPROTEIN AND IN COMPLEX WITH COA</scope>
    <scope>FUNCTION</scope>
    <scope>CATALYTIC ACTIVITY</scope>
    <scope>ACTIVE SITE</scope>
    <scope>SUBUNIT</scope>
    <scope>MUTAGENESIS OF CYS-88; HIS-156; PHE-219; SER-248; HIS-349 AND CYS-379</scope>
</reference>
<evidence type="ECO:0000255" key="1">
    <source>
        <dbReference type="PROSITE-ProRule" id="PRU10020"/>
    </source>
</evidence>
<evidence type="ECO:0000269" key="2">
    <source>
    </source>
</evidence>
<evidence type="ECO:0000269" key="3">
    <source>
    </source>
</evidence>
<evidence type="ECO:0000269" key="4">
    <source>
    </source>
</evidence>
<evidence type="ECO:0000269" key="5">
    <source>
    </source>
</evidence>
<evidence type="ECO:0000303" key="6">
    <source>
    </source>
</evidence>
<evidence type="ECO:0000303" key="7">
    <source>
    </source>
</evidence>
<evidence type="ECO:0000305" key="8"/>
<evidence type="ECO:0000305" key="9">
    <source>
    </source>
</evidence>
<evidence type="ECO:0007744" key="10">
    <source>
        <dbReference type="PDB" id="4O99"/>
    </source>
</evidence>
<evidence type="ECO:0007744" key="11">
    <source>
        <dbReference type="PDB" id="4O9A"/>
    </source>
</evidence>
<evidence type="ECO:0007744" key="12">
    <source>
        <dbReference type="PDB" id="4O9C"/>
    </source>
</evidence>
<evidence type="ECO:0007829" key="13">
    <source>
        <dbReference type="PDB" id="4O99"/>
    </source>
</evidence>
<evidence type="ECO:0007829" key="14">
    <source>
        <dbReference type="PDB" id="4O9A"/>
    </source>
</evidence>
<evidence type="ECO:0007829" key="15">
    <source>
        <dbReference type="PDB" id="4O9C"/>
    </source>
</evidence>
<sequence length="393" mass="40549">MTDVVIVSAARTAVGKFGGSLAKIPAPELGAVVIKAALERAGVKPEQVSEVIMGQVLTAGSGQNPARQAAIKAGLPAMVPAMTINKVCGSGLKAVMLAANAIMAGDAEIVVAGGQENMSAAPHVLPGSRDGFRMGDAKLVDTMIVDGLWDVYNQYHMGITAENVAKEYGITREAQDEFAVGSQNKAEAAQKAGKFDEEIVPVLIPQRKGDPVAFKTDEFVRQGATLDSMSGLKPAFDKAGTVTAANASGLNDGAAAVVVMSAAKAKELGLTPLATIKSYANAGVDPKVMGMGPVPASKRALSRAEWTPQDLDLMEINEAFAAQALAVHQQMGWDTSKVNVNGGAIAIGHPIGASGCRILVTLLHEMKRRDAKKGLASLCIGGGMGVALAVERK</sequence>
<protein>
    <recommendedName>
        <fullName>Acetyl-CoA acetyltransferase</fullName>
        <ecNumber evidence="5">2.3.1.9</ecNumber>
    </recommendedName>
    <alternativeName>
        <fullName>Acetoacetyl-CoA thiolase</fullName>
    </alternativeName>
    <alternativeName>
        <fullName evidence="7">Beta-ketothiolase</fullName>
    </alternativeName>
</protein>
<proteinExistence type="evidence at protein level"/>
<organism>
    <name type="scientific">Cupriavidus necator (strain ATCC 17699 / DSM 428 / KCTC 22496 / NCIMB 10442 / H16 / Stanier 337)</name>
    <name type="common">Ralstonia eutropha</name>
    <dbReference type="NCBI Taxonomy" id="381666"/>
    <lineage>
        <taxon>Bacteria</taxon>
        <taxon>Pseudomonadati</taxon>
        <taxon>Pseudomonadota</taxon>
        <taxon>Betaproteobacteria</taxon>
        <taxon>Burkholderiales</taxon>
        <taxon>Burkholderiaceae</taxon>
        <taxon>Cupriavidus</taxon>
    </lineage>
</organism>
<dbReference type="EC" id="2.3.1.9" evidence="5"/>
<dbReference type="EMBL" id="J04987">
    <property type="protein sequence ID" value="AAA21972.1"/>
    <property type="molecule type" value="Genomic_DNA"/>
</dbReference>
<dbReference type="EMBL" id="AM260479">
    <property type="protein sequence ID" value="CAJ92573.1"/>
    <property type="molecule type" value="Genomic_DNA"/>
</dbReference>
<dbReference type="EMBL" id="J05003">
    <property type="protein sequence ID" value="AAA21976.1"/>
    <property type="molecule type" value="Genomic_DNA"/>
</dbReference>
<dbReference type="PIR" id="A34340">
    <property type="entry name" value="XXALAE"/>
</dbReference>
<dbReference type="RefSeq" id="WP_010810132.1">
    <property type="nucleotide sequence ID" value="NZ_CP039287.1"/>
</dbReference>
<dbReference type="PDB" id="4O99">
    <property type="method" value="X-ray"/>
    <property type="resolution" value="1.96 A"/>
    <property type="chains" value="A/B/C/D=2-393"/>
</dbReference>
<dbReference type="PDB" id="4O9A">
    <property type="method" value="X-ray"/>
    <property type="resolution" value="1.52 A"/>
    <property type="chains" value="A/B/C/D=2-393"/>
</dbReference>
<dbReference type="PDB" id="4O9C">
    <property type="method" value="X-ray"/>
    <property type="resolution" value="2.00 A"/>
    <property type="chains" value="A/B/C/D/E/F/G/H=1-393"/>
</dbReference>
<dbReference type="PDBsum" id="4O99"/>
<dbReference type="PDBsum" id="4O9A"/>
<dbReference type="PDBsum" id="4O9C"/>
<dbReference type="SMR" id="P14611"/>
<dbReference type="STRING" id="381666.H16_A1438"/>
<dbReference type="KEGG" id="reh:H16_A1438"/>
<dbReference type="eggNOG" id="COG0183">
    <property type="taxonomic scope" value="Bacteria"/>
</dbReference>
<dbReference type="HOGENOM" id="CLU_031026_0_0_4"/>
<dbReference type="OrthoDB" id="9764638at2"/>
<dbReference type="BioCyc" id="MetaCyc:MONOMER-13086"/>
<dbReference type="BRENDA" id="2.3.1.9">
    <property type="organism ID" value="231"/>
</dbReference>
<dbReference type="UniPathway" id="UPA00917"/>
<dbReference type="EvolutionaryTrace" id="P14611"/>
<dbReference type="Proteomes" id="UP000008210">
    <property type="component" value="Chromosome 1"/>
</dbReference>
<dbReference type="GO" id="GO:0005737">
    <property type="term" value="C:cytoplasm"/>
    <property type="evidence" value="ECO:0007669"/>
    <property type="project" value="UniProtKB-SubCell"/>
</dbReference>
<dbReference type="GO" id="GO:0003985">
    <property type="term" value="F:acetyl-CoA C-acetyltransferase activity"/>
    <property type="evidence" value="ECO:0007669"/>
    <property type="project" value="UniProtKB-EC"/>
</dbReference>
<dbReference type="GO" id="GO:0042619">
    <property type="term" value="P:poly-hydroxybutyrate biosynthetic process"/>
    <property type="evidence" value="ECO:0007669"/>
    <property type="project" value="UniProtKB-KW"/>
</dbReference>
<dbReference type="CDD" id="cd00751">
    <property type="entry name" value="thiolase"/>
    <property type="match status" value="1"/>
</dbReference>
<dbReference type="FunFam" id="3.40.47.10:FF:000010">
    <property type="entry name" value="Acetyl-CoA acetyltransferase (Thiolase)"/>
    <property type="match status" value="1"/>
</dbReference>
<dbReference type="Gene3D" id="3.40.47.10">
    <property type="match status" value="2"/>
</dbReference>
<dbReference type="InterPro" id="IPR002155">
    <property type="entry name" value="Thiolase"/>
</dbReference>
<dbReference type="InterPro" id="IPR016039">
    <property type="entry name" value="Thiolase-like"/>
</dbReference>
<dbReference type="InterPro" id="IPR020615">
    <property type="entry name" value="Thiolase_acyl_enz_int_AS"/>
</dbReference>
<dbReference type="InterPro" id="IPR020610">
    <property type="entry name" value="Thiolase_AS"/>
</dbReference>
<dbReference type="InterPro" id="IPR020617">
    <property type="entry name" value="Thiolase_C"/>
</dbReference>
<dbReference type="InterPro" id="IPR020613">
    <property type="entry name" value="Thiolase_CS"/>
</dbReference>
<dbReference type="InterPro" id="IPR020616">
    <property type="entry name" value="Thiolase_N"/>
</dbReference>
<dbReference type="NCBIfam" id="TIGR01930">
    <property type="entry name" value="AcCoA-C-Actrans"/>
    <property type="match status" value="1"/>
</dbReference>
<dbReference type="PANTHER" id="PTHR18919:SF107">
    <property type="entry name" value="ACETYL-COA ACETYLTRANSFERASE, CYTOSOLIC"/>
    <property type="match status" value="1"/>
</dbReference>
<dbReference type="PANTHER" id="PTHR18919">
    <property type="entry name" value="ACETYL-COA C-ACYLTRANSFERASE"/>
    <property type="match status" value="1"/>
</dbReference>
<dbReference type="Pfam" id="PF02803">
    <property type="entry name" value="Thiolase_C"/>
    <property type="match status" value="1"/>
</dbReference>
<dbReference type="Pfam" id="PF00108">
    <property type="entry name" value="Thiolase_N"/>
    <property type="match status" value="1"/>
</dbReference>
<dbReference type="PIRSF" id="PIRSF000429">
    <property type="entry name" value="Ac-CoA_Ac_transf"/>
    <property type="match status" value="1"/>
</dbReference>
<dbReference type="SUPFAM" id="SSF53901">
    <property type="entry name" value="Thiolase-like"/>
    <property type="match status" value="2"/>
</dbReference>
<dbReference type="PROSITE" id="PS00098">
    <property type="entry name" value="THIOLASE_1"/>
    <property type="match status" value="1"/>
</dbReference>
<dbReference type="PROSITE" id="PS00737">
    <property type="entry name" value="THIOLASE_2"/>
    <property type="match status" value="1"/>
</dbReference>
<dbReference type="PROSITE" id="PS00099">
    <property type="entry name" value="THIOLASE_3"/>
    <property type="match status" value="1"/>
</dbReference>
<accession>P14611</accession>
<accession>Q0KBP8</accession>